<feature type="chain" id="PRO_0000046580" description="Putative low molecular weight protein-tyrosine-phosphatase">
    <location>
        <begin position="1"/>
        <end position="144"/>
    </location>
</feature>
<feature type="active site" description="Nucleophile" evidence="1">
    <location>
        <position position="9"/>
    </location>
</feature>
<feature type="active site" evidence="1">
    <location>
        <position position="15"/>
    </location>
</feature>
<feature type="active site" description="Proton donor" evidence="1">
    <location>
        <position position="115"/>
    </location>
</feature>
<name>YOR5_KLEPN</name>
<accession>Q48451</accession>
<dbReference type="EC" id="3.1.3.48"/>
<dbReference type="EMBL" id="D21242">
    <property type="protein sequence ID" value="BAA04776.1"/>
    <property type="molecule type" value="Genomic_DNA"/>
</dbReference>
<dbReference type="RefSeq" id="WP_004213675.1">
    <property type="nucleotide sequence ID" value="NZ_WXZY01000015.1"/>
</dbReference>
<dbReference type="SMR" id="Q48451"/>
<dbReference type="GO" id="GO:0004725">
    <property type="term" value="F:protein tyrosine phosphatase activity"/>
    <property type="evidence" value="ECO:0007669"/>
    <property type="project" value="UniProtKB-EC"/>
</dbReference>
<dbReference type="CDD" id="cd16343">
    <property type="entry name" value="LMWPTP"/>
    <property type="match status" value="1"/>
</dbReference>
<dbReference type="FunFam" id="3.40.50.2300:FF:000041">
    <property type="entry name" value="Low molecular weight protein-tyrosine-phosphatase"/>
    <property type="match status" value="1"/>
</dbReference>
<dbReference type="Gene3D" id="3.40.50.2300">
    <property type="match status" value="1"/>
</dbReference>
<dbReference type="InterPro" id="IPR050438">
    <property type="entry name" value="LMW_PTPase"/>
</dbReference>
<dbReference type="InterPro" id="IPR023485">
    <property type="entry name" value="Ptyr_pPase"/>
</dbReference>
<dbReference type="InterPro" id="IPR036196">
    <property type="entry name" value="Ptyr_pPase_sf"/>
</dbReference>
<dbReference type="InterPro" id="IPR017867">
    <property type="entry name" value="Tyr_phospatase_low_mol_wt"/>
</dbReference>
<dbReference type="PANTHER" id="PTHR11717">
    <property type="entry name" value="LOW MOLECULAR WEIGHT PROTEIN TYROSINE PHOSPHATASE"/>
    <property type="match status" value="1"/>
</dbReference>
<dbReference type="PANTHER" id="PTHR11717:SF31">
    <property type="entry name" value="LOW MOLECULAR WEIGHT PROTEIN-TYROSINE-PHOSPHATASE ETP-RELATED"/>
    <property type="match status" value="1"/>
</dbReference>
<dbReference type="Pfam" id="PF01451">
    <property type="entry name" value="LMWPc"/>
    <property type="match status" value="1"/>
</dbReference>
<dbReference type="PRINTS" id="PR00719">
    <property type="entry name" value="LMWPTPASE"/>
</dbReference>
<dbReference type="SMART" id="SM00226">
    <property type="entry name" value="LMWPc"/>
    <property type="match status" value="1"/>
</dbReference>
<dbReference type="SUPFAM" id="SSF52788">
    <property type="entry name" value="Phosphotyrosine protein phosphatases I"/>
    <property type="match status" value="1"/>
</dbReference>
<organism>
    <name type="scientific">Klebsiella pneumoniae</name>
    <dbReference type="NCBI Taxonomy" id="573"/>
    <lineage>
        <taxon>Bacteria</taxon>
        <taxon>Pseudomonadati</taxon>
        <taxon>Pseudomonadota</taxon>
        <taxon>Gammaproteobacteria</taxon>
        <taxon>Enterobacterales</taxon>
        <taxon>Enterobacteriaceae</taxon>
        <taxon>Klebsiella/Raoultella group</taxon>
        <taxon>Klebsiella</taxon>
        <taxon>Klebsiella pneumoniae complex</taxon>
    </lineage>
</organism>
<evidence type="ECO:0000250" key="1">
    <source>
        <dbReference type="UniProtKB" id="P11064"/>
    </source>
</evidence>
<evidence type="ECO:0000305" key="2"/>
<sequence>MFSTILIVCTGNICRSPIGERYLQQLLPSKNISSAGTQALVDHEADQSAVEVARKNGISLAGHLGRQFTSKLSKEYELILVMEKNHIEQISNIAPEARGKTMLFGHWLEQRDIPDPYRKSEEAFASVFKLIEQSALLWAEKLKA</sequence>
<keyword id="KW-0378">Hydrolase</keyword>
<keyword id="KW-0904">Protein phosphatase</keyword>
<protein>
    <recommendedName>
        <fullName>Putative low molecular weight protein-tyrosine-phosphatase</fullName>
        <ecNumber>3.1.3.48</ecNumber>
    </recommendedName>
    <alternativeName>
        <fullName>ORF5</fullName>
    </alternativeName>
</protein>
<comment type="catalytic activity">
    <reaction>
        <text>O-phospho-L-tyrosyl-[protein] + H2O = L-tyrosyl-[protein] + phosphate</text>
        <dbReference type="Rhea" id="RHEA:10684"/>
        <dbReference type="Rhea" id="RHEA-COMP:10136"/>
        <dbReference type="Rhea" id="RHEA-COMP:20101"/>
        <dbReference type="ChEBI" id="CHEBI:15377"/>
        <dbReference type="ChEBI" id="CHEBI:43474"/>
        <dbReference type="ChEBI" id="CHEBI:46858"/>
        <dbReference type="ChEBI" id="CHEBI:61978"/>
        <dbReference type="EC" id="3.1.3.48"/>
    </reaction>
</comment>
<comment type="similarity">
    <text evidence="2">Belongs to the low molecular weight phosphotyrosine protein phosphatase family.</text>
</comment>
<reference key="1">
    <citation type="journal article" date="1995" name="J. Bacteriol.">
        <title>Genomic organization of the Klebsiella pneumoniae cps region responsible for serotype K2 capsular polysaccharide synthesis in the virulent strain Chedid.</title>
        <authorList>
            <person name="Arakawa Y."/>
            <person name="Wacharotayankun R."/>
            <person name="Nagatsuka T."/>
            <person name="Ito H."/>
            <person name="Kato N."/>
            <person name="Ohta M."/>
        </authorList>
    </citation>
    <scope>NUCLEOTIDE SEQUENCE [GENOMIC DNA]</scope>
    <source>
        <strain>Chedid</strain>
    </source>
</reference>
<proteinExistence type="inferred from homology"/>